<dbReference type="EMBL" id="Y15945">
    <property type="protein sequence ID" value="CAA75898.2"/>
    <property type="molecule type" value="Genomic_DNA"/>
</dbReference>
<dbReference type="SMR" id="O77721"/>
<dbReference type="STRING" id="9796.ENSECAP00000005015"/>
<dbReference type="PaxDb" id="9796-ENSECAP00000005015"/>
<dbReference type="InParanoid" id="O77721"/>
<dbReference type="Proteomes" id="UP000002281">
    <property type="component" value="Unplaced"/>
</dbReference>
<dbReference type="GO" id="GO:0009986">
    <property type="term" value="C:cell surface"/>
    <property type="evidence" value="ECO:0000250"/>
    <property type="project" value="UniProtKB"/>
</dbReference>
<dbReference type="GO" id="GO:0005886">
    <property type="term" value="C:plasma membrane"/>
    <property type="evidence" value="ECO:0000318"/>
    <property type="project" value="GO_Central"/>
</dbReference>
<dbReference type="GO" id="GO:0004938">
    <property type="term" value="F:alpha2-adrenergic receptor activity"/>
    <property type="evidence" value="ECO:0000318"/>
    <property type="project" value="GO_Central"/>
</dbReference>
<dbReference type="GO" id="GO:0051379">
    <property type="term" value="F:epinephrine binding"/>
    <property type="evidence" value="ECO:0000318"/>
    <property type="project" value="GO_Central"/>
</dbReference>
<dbReference type="GO" id="GO:0030168">
    <property type="term" value="P:platelet activation"/>
    <property type="evidence" value="ECO:0007669"/>
    <property type="project" value="InterPro"/>
</dbReference>
<dbReference type="GO" id="GO:0006940">
    <property type="term" value="P:regulation of smooth muscle contraction"/>
    <property type="evidence" value="ECO:0007669"/>
    <property type="project" value="InterPro"/>
</dbReference>
<dbReference type="GO" id="GO:0019229">
    <property type="term" value="P:regulation of vasoconstriction"/>
    <property type="evidence" value="ECO:0007669"/>
    <property type="project" value="InterPro"/>
</dbReference>
<dbReference type="CDD" id="cd15321">
    <property type="entry name" value="7tmA_alpha2B_AR"/>
    <property type="match status" value="1"/>
</dbReference>
<dbReference type="FunFam" id="1.20.1070.10:FF:000185">
    <property type="entry name" value="Alpha-2B adrenergic receptor"/>
    <property type="match status" value="1"/>
</dbReference>
<dbReference type="Gene3D" id="1.20.1070.10">
    <property type="entry name" value="Rhodopsin 7-helix transmembrane proteins"/>
    <property type="match status" value="2"/>
</dbReference>
<dbReference type="InterPro" id="IPR002233">
    <property type="entry name" value="ADR_fam"/>
</dbReference>
<dbReference type="InterPro" id="IPR000207">
    <property type="entry name" value="ADRA2B_rcpt"/>
</dbReference>
<dbReference type="InterPro" id="IPR000276">
    <property type="entry name" value="GPCR_Rhodpsn"/>
</dbReference>
<dbReference type="InterPro" id="IPR017452">
    <property type="entry name" value="GPCR_Rhodpsn_7TM"/>
</dbReference>
<dbReference type="PANTHER" id="PTHR24248">
    <property type="entry name" value="ADRENERGIC RECEPTOR-RELATED G-PROTEIN COUPLED RECEPTOR"/>
    <property type="match status" value="1"/>
</dbReference>
<dbReference type="PANTHER" id="PTHR24248:SF130">
    <property type="entry name" value="ALPHA-2B ADRENERGIC RECEPTOR"/>
    <property type="match status" value="1"/>
</dbReference>
<dbReference type="Pfam" id="PF00001">
    <property type="entry name" value="7tm_1"/>
    <property type="match status" value="1"/>
</dbReference>
<dbReference type="PRINTS" id="PR01103">
    <property type="entry name" value="ADRENERGICR"/>
</dbReference>
<dbReference type="PRINTS" id="PR00559">
    <property type="entry name" value="ADRENRGCA2BR"/>
</dbReference>
<dbReference type="PRINTS" id="PR00237">
    <property type="entry name" value="GPCRRHODOPSN"/>
</dbReference>
<dbReference type="SUPFAM" id="SSF81321">
    <property type="entry name" value="Family A G protein-coupled receptor-like"/>
    <property type="match status" value="1"/>
</dbReference>
<dbReference type="PROSITE" id="PS00237">
    <property type="entry name" value="G_PROTEIN_RECEP_F1_1"/>
    <property type="match status" value="1"/>
</dbReference>
<dbReference type="PROSITE" id="PS50262">
    <property type="entry name" value="G_PROTEIN_RECEP_F1_2"/>
    <property type="match status" value="1"/>
</dbReference>
<evidence type="ECO:0000250" key="1"/>
<evidence type="ECO:0000250" key="2">
    <source>
        <dbReference type="UniProtKB" id="P18089"/>
    </source>
</evidence>
<evidence type="ECO:0000255" key="3">
    <source>
        <dbReference type="PROSITE-ProRule" id="PRU00521"/>
    </source>
</evidence>
<evidence type="ECO:0000256" key="4">
    <source>
        <dbReference type="SAM" id="MobiDB-lite"/>
    </source>
</evidence>
<organism>
    <name type="scientific">Equus caballus</name>
    <name type="common">Horse</name>
    <dbReference type="NCBI Taxonomy" id="9796"/>
    <lineage>
        <taxon>Eukaryota</taxon>
        <taxon>Metazoa</taxon>
        <taxon>Chordata</taxon>
        <taxon>Craniata</taxon>
        <taxon>Vertebrata</taxon>
        <taxon>Euteleostomi</taxon>
        <taxon>Mammalia</taxon>
        <taxon>Eutheria</taxon>
        <taxon>Laurasiatheria</taxon>
        <taxon>Perissodactyla</taxon>
        <taxon>Equidae</taxon>
        <taxon>Equus</taxon>
    </lineage>
</organism>
<keyword id="KW-1003">Cell membrane</keyword>
<keyword id="KW-1015">Disulfide bond</keyword>
<keyword id="KW-0297">G-protein coupled receptor</keyword>
<keyword id="KW-0472">Membrane</keyword>
<keyword id="KW-0675">Receptor</keyword>
<keyword id="KW-1185">Reference proteome</keyword>
<keyword id="KW-0807">Transducer</keyword>
<keyword id="KW-0812">Transmembrane</keyword>
<keyword id="KW-1133">Transmembrane helix</keyword>
<accession>O77721</accession>
<gene>
    <name type="primary">ADRA2B</name>
</gene>
<name>ADA2B_HORSE</name>
<sequence length="389" mass="42258">AIAAVITFLILFTIFGNALVILAVLTSRSLRAPQNLFLVSLAAADILVATLIIPFSLANELLGYWYFRRTWCEVYLALDVLFCTSSIVHLCAISLDRYWAVTRALEYNTKRTPRRIKCIILTVWLIAAVISLPPLIYKGDQGPQPRGRPQCKLNQEAWYILASSIGSFFAPCLIMILVYLRIYLIAKRSHLRGPRAKGGPGGGGSKQPHPVPAGASASAKLPTVASCLAAAGEANGHSEPTGEKEAETPEDSGTPALPSSWPALPSSGQDQKEGVCGASLEEEAEEEEEEEEEEEEGEEECEPQALPASPASACSPPLQQPQGSRVLATLRGQVLLGRGVATAGAQWWRRRAQLTREKRFTFVLAVVIGVFVLCWFPFFFSYSLGAICP</sequence>
<proteinExistence type="inferred from homology"/>
<protein>
    <recommendedName>
        <fullName>Alpha-2B adrenergic receptor</fullName>
    </recommendedName>
    <alternativeName>
        <fullName>Alpha-2B adrenoreceptor</fullName>
        <shortName>Alpha-2B adrenoceptor</shortName>
        <shortName>Alpha-2BAR</shortName>
    </alternativeName>
</protein>
<reference key="1">
    <citation type="journal article" date="1998" name="Mol. Phylogenet. Evol.">
        <title>Highly congruent molecular support for a diverse superordinal clade of endemic African mammals.</title>
        <authorList>
            <person name="Stanhope M.J."/>
            <person name="Madsen O.J."/>
            <person name="Waddell V.G."/>
            <person name="Cleven G.C."/>
            <person name="de Jong W.W."/>
            <person name="Springer M.S."/>
        </authorList>
    </citation>
    <scope>NUCLEOTIDE SEQUENCE [GENOMIC DNA]</scope>
</reference>
<reference key="2">
    <citation type="submission" date="1999-11" db="EMBL/GenBank/DDBJ databases">
        <authorList>
            <person name="Madsen O.J."/>
        </authorList>
    </citation>
    <scope>SEQUENCE REVISION</scope>
</reference>
<comment type="function">
    <text>Alpha-2 adrenergic receptors mediate the catecholamine-induced inhibition of adenylate cyclase through the action of G proteins.</text>
</comment>
<comment type="subunit">
    <text evidence="2">Interacts with RAB26. Interacts with PPP1R9B. Interacts with GGA1, GGA2 and GGA3.</text>
</comment>
<comment type="subcellular location">
    <subcellularLocation>
        <location evidence="2">Cell membrane</location>
        <topology evidence="2">Multi-pass membrane protein</topology>
    </subcellularLocation>
    <text evidence="2">Interaction with RAB26, GGA1, GGA2 and GGA3 mediates transport from the Golgi to the cell membrane.</text>
</comment>
<comment type="similarity">
    <text evidence="3">Belongs to the G-protein coupled receptor 1 family. Adrenergic receptor subfamily. ADRA2B sub-subfamily.</text>
</comment>
<feature type="chain" id="PRO_0000069093" description="Alpha-2B adrenergic receptor">
    <location>
        <begin position="1" status="less than"/>
        <end position="389" status="greater than"/>
    </location>
</feature>
<feature type="transmembrane region" description="Helical; Name=1" evidence="1">
    <location>
        <begin position="1" status="less than"/>
        <end position="25"/>
    </location>
</feature>
<feature type="topological domain" description="Cytoplasmic" evidence="1">
    <location>
        <begin position="26"/>
        <end position="36"/>
    </location>
</feature>
<feature type="transmembrane region" description="Helical; Name=2" evidence="1">
    <location>
        <begin position="37"/>
        <end position="62"/>
    </location>
</feature>
<feature type="topological domain" description="Extracellular" evidence="1">
    <location>
        <begin position="63"/>
        <end position="72"/>
    </location>
</feature>
<feature type="transmembrane region" description="Helical; Name=3" evidence="1">
    <location>
        <begin position="73"/>
        <end position="95"/>
    </location>
</feature>
<feature type="topological domain" description="Cytoplasmic" evidence="1">
    <location>
        <begin position="96"/>
        <end position="117"/>
    </location>
</feature>
<feature type="transmembrane region" description="Helical; Name=4" evidence="1">
    <location>
        <begin position="118"/>
        <end position="140"/>
    </location>
</feature>
<feature type="topological domain" description="Extracellular" evidence="1">
    <location>
        <begin position="141"/>
        <end position="156"/>
    </location>
</feature>
<feature type="transmembrane region" description="Helical; Name=5" evidence="1">
    <location>
        <begin position="157"/>
        <end position="180"/>
    </location>
</feature>
<feature type="topological domain" description="Cytoplasmic" evidence="1">
    <location>
        <begin position="181"/>
        <end position="363"/>
    </location>
</feature>
<feature type="transmembrane region" description="Helical; Name=6" evidence="1">
    <location>
        <begin position="364"/>
        <end position="387"/>
    </location>
</feature>
<feature type="topological domain" description="Extracellular" evidence="1">
    <location>
        <begin position="388"/>
        <end position="389" status="greater than"/>
    </location>
</feature>
<feature type="region of interest" description="Disordered" evidence="4">
    <location>
        <begin position="194"/>
        <end position="216"/>
    </location>
</feature>
<feature type="region of interest" description="Disordered" evidence="4">
    <location>
        <begin position="233"/>
        <end position="320"/>
    </location>
</feature>
<feature type="compositionally biased region" description="Gly residues" evidence="4">
    <location>
        <begin position="196"/>
        <end position="205"/>
    </location>
</feature>
<feature type="compositionally biased region" description="Low complexity" evidence="4">
    <location>
        <begin position="255"/>
        <end position="267"/>
    </location>
</feature>
<feature type="compositionally biased region" description="Acidic residues" evidence="4">
    <location>
        <begin position="280"/>
        <end position="302"/>
    </location>
</feature>
<feature type="compositionally biased region" description="Low complexity" evidence="4">
    <location>
        <begin position="303"/>
        <end position="320"/>
    </location>
</feature>
<feature type="site" description="Implicated in ligand binding" evidence="1">
    <location>
        <position position="79"/>
    </location>
</feature>
<feature type="site" description="Implicated in catechol agonist binding" evidence="1">
    <location>
        <position position="163"/>
    </location>
</feature>
<feature type="site" description="Implicated in catechol agonist binding" evidence="1">
    <location>
        <position position="167"/>
    </location>
</feature>
<feature type="disulfide bond" evidence="3">
    <location>
        <begin position="72"/>
        <end position="151"/>
    </location>
</feature>
<feature type="non-terminal residue">
    <location>
        <position position="1"/>
    </location>
</feature>
<feature type="non-terminal residue">
    <location>
        <position position="389"/>
    </location>
</feature>